<evidence type="ECO:0000255" key="1">
    <source>
        <dbReference type="HAMAP-Rule" id="MF_01013"/>
    </source>
</evidence>
<reference key="1">
    <citation type="submission" date="2007-10" db="EMBL/GenBank/DDBJ databases">
        <title>Genome sequence of Campylobacter concisus 13826 isolated from human feces.</title>
        <authorList>
            <person name="Fouts D.E."/>
            <person name="Mongodin E.F."/>
            <person name="Puiu D."/>
            <person name="Sebastian Y."/>
            <person name="Miller W.G."/>
            <person name="Mandrell R.E."/>
            <person name="On S."/>
            <person name="Nelson K.E."/>
        </authorList>
    </citation>
    <scope>NUCLEOTIDE SEQUENCE [LARGE SCALE GENOMIC DNA]</scope>
    <source>
        <strain>13826</strain>
    </source>
</reference>
<name>HIS6_CAMC1</name>
<proteinExistence type="inferred from homology"/>
<dbReference type="EC" id="4.3.2.10" evidence="1"/>
<dbReference type="EMBL" id="CP000792">
    <property type="protein sequence ID" value="EAT99046.1"/>
    <property type="molecule type" value="Genomic_DNA"/>
</dbReference>
<dbReference type="RefSeq" id="WP_012140656.1">
    <property type="nucleotide sequence ID" value="NC_009802.2"/>
</dbReference>
<dbReference type="SMR" id="A7ZGB2"/>
<dbReference type="STRING" id="360104.CCC13826_1890"/>
<dbReference type="KEGG" id="cco:CCC13826_1890"/>
<dbReference type="eggNOG" id="COG0107">
    <property type="taxonomic scope" value="Bacteria"/>
</dbReference>
<dbReference type="HOGENOM" id="CLU_048577_4_0_7"/>
<dbReference type="OrthoDB" id="9807749at2"/>
<dbReference type="UniPathway" id="UPA00031">
    <property type="reaction ID" value="UER00010"/>
</dbReference>
<dbReference type="Proteomes" id="UP000001121">
    <property type="component" value="Chromosome"/>
</dbReference>
<dbReference type="GO" id="GO:0005737">
    <property type="term" value="C:cytoplasm"/>
    <property type="evidence" value="ECO:0007669"/>
    <property type="project" value="UniProtKB-SubCell"/>
</dbReference>
<dbReference type="GO" id="GO:0000107">
    <property type="term" value="F:imidazoleglycerol-phosphate synthase activity"/>
    <property type="evidence" value="ECO:0007669"/>
    <property type="project" value="UniProtKB-UniRule"/>
</dbReference>
<dbReference type="GO" id="GO:0016829">
    <property type="term" value="F:lyase activity"/>
    <property type="evidence" value="ECO:0007669"/>
    <property type="project" value="UniProtKB-KW"/>
</dbReference>
<dbReference type="GO" id="GO:0000105">
    <property type="term" value="P:L-histidine biosynthetic process"/>
    <property type="evidence" value="ECO:0007669"/>
    <property type="project" value="UniProtKB-UniRule"/>
</dbReference>
<dbReference type="CDD" id="cd04731">
    <property type="entry name" value="HisF"/>
    <property type="match status" value="1"/>
</dbReference>
<dbReference type="FunFam" id="3.20.20.70:FF:000006">
    <property type="entry name" value="Imidazole glycerol phosphate synthase subunit HisF"/>
    <property type="match status" value="1"/>
</dbReference>
<dbReference type="Gene3D" id="3.20.20.70">
    <property type="entry name" value="Aldolase class I"/>
    <property type="match status" value="1"/>
</dbReference>
<dbReference type="HAMAP" id="MF_01013">
    <property type="entry name" value="HisF"/>
    <property type="match status" value="1"/>
</dbReference>
<dbReference type="InterPro" id="IPR013785">
    <property type="entry name" value="Aldolase_TIM"/>
</dbReference>
<dbReference type="InterPro" id="IPR006062">
    <property type="entry name" value="His_biosynth"/>
</dbReference>
<dbReference type="InterPro" id="IPR004651">
    <property type="entry name" value="HisF"/>
</dbReference>
<dbReference type="InterPro" id="IPR050064">
    <property type="entry name" value="IGPS_HisA/HisF"/>
</dbReference>
<dbReference type="InterPro" id="IPR011060">
    <property type="entry name" value="RibuloseP-bd_barrel"/>
</dbReference>
<dbReference type="NCBIfam" id="TIGR00735">
    <property type="entry name" value="hisF"/>
    <property type="match status" value="1"/>
</dbReference>
<dbReference type="PANTHER" id="PTHR21235:SF2">
    <property type="entry name" value="IMIDAZOLE GLYCEROL PHOSPHATE SYNTHASE HISHF"/>
    <property type="match status" value="1"/>
</dbReference>
<dbReference type="PANTHER" id="PTHR21235">
    <property type="entry name" value="IMIDAZOLE GLYCEROL PHOSPHATE SYNTHASE SUBUNIT HISF/H IGP SYNTHASE SUBUNIT HISF/H"/>
    <property type="match status" value="1"/>
</dbReference>
<dbReference type="Pfam" id="PF00977">
    <property type="entry name" value="His_biosynth"/>
    <property type="match status" value="1"/>
</dbReference>
<dbReference type="SUPFAM" id="SSF51366">
    <property type="entry name" value="Ribulose-phoshate binding barrel"/>
    <property type="match status" value="1"/>
</dbReference>
<comment type="function">
    <text evidence="1">IGPS catalyzes the conversion of PRFAR and glutamine to IGP, AICAR and glutamate. The HisF subunit catalyzes the cyclization activity that produces IGP and AICAR from PRFAR using the ammonia provided by the HisH subunit.</text>
</comment>
<comment type="catalytic activity">
    <reaction evidence="1">
        <text>5-[(5-phospho-1-deoxy-D-ribulos-1-ylimino)methylamino]-1-(5-phospho-beta-D-ribosyl)imidazole-4-carboxamide + L-glutamine = D-erythro-1-(imidazol-4-yl)glycerol 3-phosphate + 5-amino-1-(5-phospho-beta-D-ribosyl)imidazole-4-carboxamide + L-glutamate + H(+)</text>
        <dbReference type="Rhea" id="RHEA:24793"/>
        <dbReference type="ChEBI" id="CHEBI:15378"/>
        <dbReference type="ChEBI" id="CHEBI:29985"/>
        <dbReference type="ChEBI" id="CHEBI:58278"/>
        <dbReference type="ChEBI" id="CHEBI:58359"/>
        <dbReference type="ChEBI" id="CHEBI:58475"/>
        <dbReference type="ChEBI" id="CHEBI:58525"/>
        <dbReference type="EC" id="4.3.2.10"/>
    </reaction>
</comment>
<comment type="pathway">
    <text evidence="1">Amino-acid biosynthesis; L-histidine biosynthesis; L-histidine from 5-phospho-alpha-D-ribose 1-diphosphate: step 5/9.</text>
</comment>
<comment type="subunit">
    <text evidence="1">Heterodimer of HisH and HisF.</text>
</comment>
<comment type="subcellular location">
    <subcellularLocation>
        <location evidence="1">Cytoplasm</location>
    </subcellularLocation>
</comment>
<comment type="similarity">
    <text evidence="1">Belongs to the HisA/HisF family.</text>
</comment>
<sequence length="251" mass="26994">MNHFAKRIIPCLDVKDGRVVKGVNFVGLVDAGDPVEIAKRYNDEGADELCFLDITASHLGRDTIVDVVKKVASKLFIPLTVGGGIRTIDDISRLLNAGCDKVSLNSSAIKDPNLIDEAAKKFGSQCVVVAIDAKKIENGYSVFINGGRIDTKKDAFSWAKEVESRGAGEILLTSMDNDGVKQGFSLELTKIFSALSIPTIASGGAGKMEHFKDAFEVGADACLAASIFHFGEIEIKKLKEYLKANGVEVRL</sequence>
<keyword id="KW-0028">Amino-acid biosynthesis</keyword>
<keyword id="KW-0963">Cytoplasm</keyword>
<keyword id="KW-0368">Histidine biosynthesis</keyword>
<keyword id="KW-0456">Lyase</keyword>
<feature type="chain" id="PRO_1000072922" description="Imidazole glycerol phosphate synthase subunit HisF">
    <location>
        <begin position="1"/>
        <end position="251"/>
    </location>
</feature>
<feature type="active site" evidence="1">
    <location>
        <position position="13"/>
    </location>
</feature>
<feature type="active site" evidence="1">
    <location>
        <position position="132"/>
    </location>
</feature>
<gene>
    <name evidence="1" type="primary">hisF</name>
    <name type="ordered locus">Ccon26_19890</name>
    <name type="ORF">CCC13826_1890</name>
</gene>
<accession>A7ZGB2</accession>
<organism>
    <name type="scientific">Campylobacter concisus (strain 13826)</name>
    <dbReference type="NCBI Taxonomy" id="360104"/>
    <lineage>
        <taxon>Bacteria</taxon>
        <taxon>Pseudomonadati</taxon>
        <taxon>Campylobacterota</taxon>
        <taxon>Epsilonproteobacteria</taxon>
        <taxon>Campylobacterales</taxon>
        <taxon>Campylobacteraceae</taxon>
        <taxon>Campylobacter</taxon>
    </lineage>
</organism>
<protein>
    <recommendedName>
        <fullName evidence="1">Imidazole glycerol phosphate synthase subunit HisF</fullName>
        <ecNumber evidence="1">4.3.2.10</ecNumber>
    </recommendedName>
    <alternativeName>
        <fullName evidence="1">IGP synthase cyclase subunit</fullName>
    </alternativeName>
    <alternativeName>
        <fullName evidence="1">IGP synthase subunit HisF</fullName>
    </alternativeName>
    <alternativeName>
        <fullName evidence="1">ImGP synthase subunit HisF</fullName>
        <shortName evidence="1">IGPS subunit HisF</shortName>
    </alternativeName>
</protein>